<feature type="chain" id="PRO_0000373231" description="Protein MGF 300-2R">
    <location>
        <begin position="1"/>
        <end position="154"/>
    </location>
</feature>
<evidence type="ECO:0000250" key="1"/>
<evidence type="ECO:0000305" key="2"/>
<sequence>MITLYEAAIKTLITHRKQILKHPDSREILLALGLYWDKTHILVKCRECGKMSLTGKHSTKCININCLLILAIKKKNKRMVDTLIRMGADVTYIHLLKNKIKLSYNQLSMLKSNSQISLKELHAICYLLYGRLPKKIKQGMQLCKTMAGLCGELL</sequence>
<organismHost>
    <name type="scientific">Ornithodoros</name>
    <name type="common">relapsing fever ticks</name>
    <dbReference type="NCBI Taxonomy" id="6937"/>
</organismHost>
<organismHost>
    <name type="scientific">Sus scrofa</name>
    <name type="common">Pig</name>
    <dbReference type="NCBI Taxonomy" id="9823"/>
</organismHost>
<dbReference type="EMBL" id="U18466">
    <property type="protein sequence ID" value="AAA65251.1"/>
    <property type="molecule type" value="Genomic_DNA"/>
</dbReference>
<dbReference type="EMBL" id="U13763">
    <property type="protein sequence ID" value="AAC54519.1"/>
    <property type="molecule type" value="Genomic_DNA"/>
</dbReference>
<dbReference type="RefSeq" id="NP_042715.1">
    <property type="nucleotide sequence ID" value="NC_001659.2"/>
</dbReference>
<dbReference type="GeneID" id="22220387"/>
<dbReference type="KEGG" id="vg:22220387"/>
<dbReference type="Proteomes" id="UP000000624">
    <property type="component" value="Segment"/>
</dbReference>
<reference key="1">
    <citation type="journal article" date="1990" name="J. Virol.">
        <title>Multigene families in African swine fever virus: family 360.</title>
        <authorList>
            <person name="Gonzalez A."/>
            <person name="Calvo V."/>
            <person name="Almazan F."/>
            <person name="Almendral J.M."/>
            <person name="Ramirez J.C."/>
            <person name="de la Vega I."/>
            <person name="Blasco R."/>
            <person name="Vinuela E."/>
        </authorList>
    </citation>
    <scope>NUCLEOTIDE SEQUENCE [GENOMIC DNA]</scope>
</reference>
<reference key="2">
    <citation type="journal article" date="1995" name="Virology">
        <title>Analysis of the complete nucleotide sequence of African swine fever virus.</title>
        <authorList>
            <person name="Yanez R.J."/>
            <person name="Rodriguez J.M."/>
            <person name="Nogal M.L."/>
            <person name="Yuste L."/>
            <person name="Enriquez C."/>
            <person name="Rodriguez J.F."/>
            <person name="Vinuela E."/>
        </authorList>
    </citation>
    <scope>NUCLEOTIDE SEQUENCE [LARGE SCALE GENOMIC DNA]</scope>
</reference>
<gene>
    <name type="ordered locus">BA71V-020</name>
    <name type="ORF">J154R</name>
</gene>
<proteinExistence type="inferred from homology"/>
<protein>
    <recommendedName>
        <fullName>Protein MGF 300-2R</fullName>
    </recommendedName>
</protein>
<comment type="function">
    <text evidence="1">Plays a role in virus cell tropism, and may be required for efficient virus replication in macrophages.</text>
</comment>
<comment type="similarity">
    <text evidence="2">Belongs to the asfivirus MGF 300 family.</text>
</comment>
<keyword id="KW-1185">Reference proteome</keyword>
<name>3002R_ASFB7</name>
<accession>Q89554</accession>
<organism>
    <name type="scientific">African swine fever virus (strain Badajoz 1971 Vero-adapted)</name>
    <name type="common">Ba71V</name>
    <name type="synonym">ASFV</name>
    <dbReference type="NCBI Taxonomy" id="10498"/>
    <lineage>
        <taxon>Viruses</taxon>
        <taxon>Varidnaviria</taxon>
        <taxon>Bamfordvirae</taxon>
        <taxon>Nucleocytoviricota</taxon>
        <taxon>Pokkesviricetes</taxon>
        <taxon>Asfuvirales</taxon>
        <taxon>Asfarviridae</taxon>
        <taxon>Asfivirus</taxon>
        <taxon>African swine fever virus</taxon>
    </lineage>
</organism>